<protein>
    <recommendedName>
        <fullName evidence="1">Large ribosomal subunit protein uL23</fullName>
    </recommendedName>
    <alternativeName>
        <fullName evidence="2">50S ribosomal protein L23</fullName>
    </alternativeName>
</protein>
<reference key="1">
    <citation type="journal article" date="2008" name="Genome Res.">
        <title>Chlamydia trachomatis: genome sequence analysis of lymphogranuloma venereum isolates.</title>
        <authorList>
            <person name="Thomson N.R."/>
            <person name="Holden M.T.G."/>
            <person name="Carder C."/>
            <person name="Lennard N."/>
            <person name="Lockey S.J."/>
            <person name="Marsh P."/>
            <person name="Skipp P."/>
            <person name="O'Connor C.D."/>
            <person name="Goodhead I."/>
            <person name="Norbertzcak H."/>
            <person name="Harris B."/>
            <person name="Ormond D."/>
            <person name="Rance R."/>
            <person name="Quail M.A."/>
            <person name="Parkhill J."/>
            <person name="Stephens R.S."/>
            <person name="Clarke I.N."/>
        </authorList>
    </citation>
    <scope>NUCLEOTIDE SEQUENCE [LARGE SCALE GENOMIC DNA]</scope>
    <source>
        <strain>ATCC VR-902B / DSM 19102 / 434/Bu</strain>
    </source>
</reference>
<dbReference type="EMBL" id="AM884176">
    <property type="protein sequence ID" value="CAP04226.1"/>
    <property type="molecule type" value="Genomic_DNA"/>
</dbReference>
<dbReference type="RefSeq" id="WP_009872725.1">
    <property type="nucleotide sequence ID" value="NC_010287.1"/>
</dbReference>
<dbReference type="RefSeq" id="YP_001654859.1">
    <property type="nucleotide sequence ID" value="NC_010287.1"/>
</dbReference>
<dbReference type="SMR" id="B0B8A0"/>
<dbReference type="KEGG" id="ctb:CTL0788"/>
<dbReference type="PATRIC" id="fig|471472.4.peg.844"/>
<dbReference type="HOGENOM" id="CLU_037562_3_1_0"/>
<dbReference type="Proteomes" id="UP001154402">
    <property type="component" value="Chromosome"/>
</dbReference>
<dbReference type="GO" id="GO:1990904">
    <property type="term" value="C:ribonucleoprotein complex"/>
    <property type="evidence" value="ECO:0007669"/>
    <property type="project" value="UniProtKB-KW"/>
</dbReference>
<dbReference type="GO" id="GO:0005840">
    <property type="term" value="C:ribosome"/>
    <property type="evidence" value="ECO:0007669"/>
    <property type="project" value="UniProtKB-KW"/>
</dbReference>
<dbReference type="GO" id="GO:0019843">
    <property type="term" value="F:rRNA binding"/>
    <property type="evidence" value="ECO:0007669"/>
    <property type="project" value="UniProtKB-UniRule"/>
</dbReference>
<dbReference type="GO" id="GO:0003735">
    <property type="term" value="F:structural constituent of ribosome"/>
    <property type="evidence" value="ECO:0007669"/>
    <property type="project" value="InterPro"/>
</dbReference>
<dbReference type="GO" id="GO:0006412">
    <property type="term" value="P:translation"/>
    <property type="evidence" value="ECO:0007669"/>
    <property type="project" value="UniProtKB-UniRule"/>
</dbReference>
<dbReference type="Gene3D" id="3.30.70.330">
    <property type="match status" value="1"/>
</dbReference>
<dbReference type="HAMAP" id="MF_01369_B">
    <property type="entry name" value="Ribosomal_uL23_B"/>
    <property type="match status" value="1"/>
</dbReference>
<dbReference type="InterPro" id="IPR012677">
    <property type="entry name" value="Nucleotide-bd_a/b_plait_sf"/>
</dbReference>
<dbReference type="InterPro" id="IPR013025">
    <property type="entry name" value="Ribosomal_uL23-like"/>
</dbReference>
<dbReference type="InterPro" id="IPR012678">
    <property type="entry name" value="Ribosomal_uL23/eL15/eS24_sf"/>
</dbReference>
<dbReference type="NCBIfam" id="NF004362">
    <property type="entry name" value="PRK05738.2-2"/>
    <property type="match status" value="1"/>
</dbReference>
<dbReference type="Pfam" id="PF00276">
    <property type="entry name" value="Ribosomal_L23"/>
    <property type="match status" value="1"/>
</dbReference>
<dbReference type="SUPFAM" id="SSF54189">
    <property type="entry name" value="Ribosomal proteins S24e, L23 and L15e"/>
    <property type="match status" value="1"/>
</dbReference>
<organism>
    <name type="scientific">Chlamydia trachomatis serovar L2 (strain ATCC VR-902B / DSM 19102 / 434/Bu)</name>
    <dbReference type="NCBI Taxonomy" id="471472"/>
    <lineage>
        <taxon>Bacteria</taxon>
        <taxon>Pseudomonadati</taxon>
        <taxon>Chlamydiota</taxon>
        <taxon>Chlamydiia</taxon>
        <taxon>Chlamydiales</taxon>
        <taxon>Chlamydiaceae</taxon>
        <taxon>Chlamydia/Chlamydophila group</taxon>
        <taxon>Chlamydia</taxon>
    </lineage>
</organism>
<keyword id="KW-0687">Ribonucleoprotein</keyword>
<keyword id="KW-0689">Ribosomal protein</keyword>
<keyword id="KW-0694">RNA-binding</keyword>
<keyword id="KW-0699">rRNA-binding</keyword>
<proteinExistence type="inferred from homology"/>
<name>RL23_CHLT2</name>
<accession>B0B8A0</accession>
<gene>
    <name evidence="1" type="primary">rplW</name>
    <name type="ordered locus">CTL0788</name>
</gene>
<sequence length="111" mass="12223">MKDPYDVVKRHYVTEKAKMLEGLSLGDGEGKKKGSFCKDPKYTFIVAGDATKPMIAEAIEAIYSAKGVKVKKVNTMCVKPQPTRIFRGRRKGRTAGFKKAIVTFVDGHSIG</sequence>
<feature type="chain" id="PRO_1000144551" description="Large ribosomal subunit protein uL23">
    <location>
        <begin position="1"/>
        <end position="111"/>
    </location>
</feature>
<evidence type="ECO:0000255" key="1">
    <source>
        <dbReference type="HAMAP-Rule" id="MF_01369"/>
    </source>
</evidence>
<evidence type="ECO:0000305" key="2"/>
<comment type="function">
    <text evidence="1">One of the early assembly proteins it binds 23S rRNA. One of the proteins that surrounds the polypeptide exit tunnel on the outside of the ribosome. Forms the main docking site for trigger factor binding to the ribosome.</text>
</comment>
<comment type="subunit">
    <text evidence="1">Part of the 50S ribosomal subunit. Contacts protein L29, and trigger factor when it is bound to the ribosome.</text>
</comment>
<comment type="similarity">
    <text evidence="1">Belongs to the universal ribosomal protein uL23 family.</text>
</comment>